<organism>
    <name type="scientific">Ureaplasma parvum serovar 3 (strain ATCC 27815 / 27 / NCTC 11736)</name>
    <dbReference type="NCBI Taxonomy" id="505682"/>
    <lineage>
        <taxon>Bacteria</taxon>
        <taxon>Bacillati</taxon>
        <taxon>Mycoplasmatota</taxon>
        <taxon>Mycoplasmoidales</taxon>
        <taxon>Mycoplasmoidaceae</taxon>
        <taxon>Ureaplasma</taxon>
    </lineage>
</organism>
<protein>
    <recommendedName>
        <fullName>ATP synthase subunit alpha</fullName>
        <ecNumber>7.1.2.2</ecNumber>
    </recommendedName>
    <alternativeName>
        <fullName>ATP synthase F1 sector subunit alpha</fullName>
    </alternativeName>
    <alternativeName>
        <fullName>F-ATPase subunit alpha</fullName>
    </alternativeName>
</protein>
<gene>
    <name type="primary">atpA</name>
    <name type="ordered locus">UPA3_0138</name>
</gene>
<sequence length="799" mass="89447">MTDNKNHSLISDIKSQIKKFSEKALTLEVGNVISLGDGIVLVDGLDNVMLNEIVRFENGVEGMALNLEEDAVGVVLLGDYSNIKEGDRVYRTKRIVEVPVGDVMLGRVVDALGKAVDNKGNIVANKFSVIEKIAPGVMDRKSVHQPLETGILSIDAMFPIGKGQRELIIGDRQTGKTTIAIDAIINQKGRNVNCVYVAIGQKNSTIANVVRELEAHGAMEYTTVVTANASELPALQYIAPFTGVTIAEEWMHQGKDVLIVYDDLSKHAIAYRTLSLLLRRPPGREAYPGDVFYLHSRLLERACKLKDELGAGSITALPIIETQAGDISAYIPTNVISITDGQIFMMTSLFNAGQRPAIDAGQSVSRVGSAAQIKSVKQTGASLKLELANYRELEAFSQFGSDLDDETKRILKLGKAVMAVIKQAPNKPYNQTDEAIILFTVKEKLIPQVPVERIQDFKEYLLNYFKGTKLRADLEDKKAFDKENTPAFRCAIQKAINSFLNNSQDFKPCEEAEQTAFDKFFNENESIVVDGENDFNFINEEVSLKPTTETSEAVQIEEKVQDFVEPQEILETNKMEENHIFEEVEPEKIICEHHEFEIAENQEKIEGQQVLEDTNHEYSIYETVEQSGEVDNDESKDDDLEVLVPVAEIEHDEAILDERENRNWVFSDSAVSEVEKQTIMISISSNEAEQLFDNAKSVVFFKVTPKYPVEKVLVYVTSPVQKVVGEFDLLKIDVNSVNTSWNKYRSSSVISSRKEYLEYFNSHKEAHALLASKVYKYRKPKDLASFNMNKGPSGFTYLK</sequence>
<reference key="1">
    <citation type="submission" date="2008-02" db="EMBL/GenBank/DDBJ databases">
        <title>Genome sequence of Ureaplasma parvum serovar 3.</title>
        <authorList>
            <person name="Methe B.A."/>
            <person name="Glass J."/>
            <person name="Waites K."/>
            <person name="Shrivastava S."/>
        </authorList>
    </citation>
    <scope>NUCLEOTIDE SEQUENCE [LARGE SCALE GENOMIC DNA]</scope>
    <source>
        <strain>ATCC 27815 / 27 / NCTC 11736</strain>
    </source>
</reference>
<feature type="chain" id="PRO_0000339065" description="ATP synthase subunit alpha">
    <location>
        <begin position="1"/>
        <end position="799"/>
    </location>
</feature>
<feature type="region of interest" description="ATP synthase alpha chain">
    <location>
        <begin position="1"/>
        <end position="549"/>
    </location>
</feature>
<feature type="region of interest" description="Unknown">
    <location>
        <begin position="550"/>
        <end position="799"/>
    </location>
</feature>
<feature type="binding site" evidence="1">
    <location>
        <begin position="170"/>
        <end position="177"/>
    </location>
    <ligand>
        <name>ATP</name>
        <dbReference type="ChEBI" id="CHEBI:30616"/>
    </ligand>
</feature>
<feature type="site" description="Required for activity" evidence="1">
    <location>
        <position position="363"/>
    </location>
</feature>
<keyword id="KW-0066">ATP synthesis</keyword>
<keyword id="KW-0067">ATP-binding</keyword>
<keyword id="KW-1003">Cell membrane</keyword>
<keyword id="KW-0139">CF(1)</keyword>
<keyword id="KW-0375">Hydrogen ion transport</keyword>
<keyword id="KW-0406">Ion transport</keyword>
<keyword id="KW-0472">Membrane</keyword>
<keyword id="KW-0547">Nucleotide-binding</keyword>
<keyword id="KW-1278">Translocase</keyword>
<keyword id="KW-0813">Transport</keyword>
<evidence type="ECO:0000250" key="1"/>
<evidence type="ECO:0000305" key="2"/>
<dbReference type="EC" id="7.1.2.2"/>
<dbReference type="EMBL" id="CP000942">
    <property type="protein sequence ID" value="ACA32826.1"/>
    <property type="molecule type" value="Genomic_DNA"/>
</dbReference>
<dbReference type="RefSeq" id="WP_006689132.1">
    <property type="nucleotide sequence ID" value="NC_010503.1"/>
</dbReference>
<dbReference type="SMR" id="B1AIC1"/>
<dbReference type="GeneID" id="77133460"/>
<dbReference type="KEGG" id="upa:UPA3_0138"/>
<dbReference type="HOGENOM" id="CLU_019180_0_0_14"/>
<dbReference type="Proteomes" id="UP000002162">
    <property type="component" value="Chromosome"/>
</dbReference>
<dbReference type="GO" id="GO:0005886">
    <property type="term" value="C:plasma membrane"/>
    <property type="evidence" value="ECO:0007669"/>
    <property type="project" value="UniProtKB-SubCell"/>
</dbReference>
<dbReference type="GO" id="GO:0045259">
    <property type="term" value="C:proton-transporting ATP synthase complex"/>
    <property type="evidence" value="ECO:0007669"/>
    <property type="project" value="UniProtKB-KW"/>
</dbReference>
<dbReference type="GO" id="GO:0043531">
    <property type="term" value="F:ADP binding"/>
    <property type="evidence" value="ECO:0007669"/>
    <property type="project" value="TreeGrafter"/>
</dbReference>
<dbReference type="GO" id="GO:0005524">
    <property type="term" value="F:ATP binding"/>
    <property type="evidence" value="ECO:0007669"/>
    <property type="project" value="UniProtKB-UniRule"/>
</dbReference>
<dbReference type="GO" id="GO:0046933">
    <property type="term" value="F:proton-transporting ATP synthase activity, rotational mechanism"/>
    <property type="evidence" value="ECO:0007669"/>
    <property type="project" value="UniProtKB-UniRule"/>
</dbReference>
<dbReference type="CDD" id="cd18113">
    <property type="entry name" value="ATP-synt_F1_alpha_C"/>
    <property type="match status" value="1"/>
</dbReference>
<dbReference type="CDD" id="cd18116">
    <property type="entry name" value="ATP-synt_F1_alpha_N"/>
    <property type="match status" value="1"/>
</dbReference>
<dbReference type="CDD" id="cd01132">
    <property type="entry name" value="F1-ATPase_alpha_CD"/>
    <property type="match status" value="1"/>
</dbReference>
<dbReference type="FunFam" id="3.40.50.300:FF:000002">
    <property type="entry name" value="ATP synthase subunit alpha"/>
    <property type="match status" value="1"/>
</dbReference>
<dbReference type="Gene3D" id="2.40.30.20">
    <property type="match status" value="1"/>
</dbReference>
<dbReference type="Gene3D" id="1.20.150.20">
    <property type="entry name" value="ATP synthase alpha/beta chain, C-terminal domain"/>
    <property type="match status" value="1"/>
</dbReference>
<dbReference type="Gene3D" id="2.30.130.30">
    <property type="entry name" value="Hypothetical protein"/>
    <property type="match status" value="1"/>
</dbReference>
<dbReference type="Gene3D" id="3.40.50.300">
    <property type="entry name" value="P-loop containing nucleotide triphosphate hydrolases"/>
    <property type="match status" value="1"/>
</dbReference>
<dbReference type="HAMAP" id="MF_01346">
    <property type="entry name" value="ATP_synth_alpha_bact"/>
    <property type="match status" value="1"/>
</dbReference>
<dbReference type="InterPro" id="IPR023366">
    <property type="entry name" value="ATP_synth_asu-like_sf"/>
</dbReference>
<dbReference type="InterPro" id="IPR000793">
    <property type="entry name" value="ATP_synth_asu_C"/>
</dbReference>
<dbReference type="InterPro" id="IPR038376">
    <property type="entry name" value="ATP_synth_asu_C_sf"/>
</dbReference>
<dbReference type="InterPro" id="IPR033732">
    <property type="entry name" value="ATP_synth_F1_a_nt-bd_dom"/>
</dbReference>
<dbReference type="InterPro" id="IPR005294">
    <property type="entry name" value="ATP_synth_F1_asu"/>
</dbReference>
<dbReference type="InterPro" id="IPR020003">
    <property type="entry name" value="ATPase_a/bsu_AS"/>
</dbReference>
<dbReference type="InterPro" id="IPR004100">
    <property type="entry name" value="ATPase_F1/V1/A1_a/bsu_N"/>
</dbReference>
<dbReference type="InterPro" id="IPR036121">
    <property type="entry name" value="ATPase_F1/V1/A1_a/bsu_N_sf"/>
</dbReference>
<dbReference type="InterPro" id="IPR000194">
    <property type="entry name" value="ATPase_F1/V1/A1_a/bsu_nucl-bd"/>
</dbReference>
<dbReference type="InterPro" id="IPR027417">
    <property type="entry name" value="P-loop_NTPase"/>
</dbReference>
<dbReference type="NCBIfam" id="TIGR00962">
    <property type="entry name" value="atpA"/>
    <property type="match status" value="1"/>
</dbReference>
<dbReference type="NCBIfam" id="NF009884">
    <property type="entry name" value="PRK13343.1"/>
    <property type="match status" value="1"/>
</dbReference>
<dbReference type="PANTHER" id="PTHR48082">
    <property type="entry name" value="ATP SYNTHASE SUBUNIT ALPHA, MITOCHONDRIAL"/>
    <property type="match status" value="1"/>
</dbReference>
<dbReference type="PANTHER" id="PTHR48082:SF2">
    <property type="entry name" value="ATP SYNTHASE SUBUNIT ALPHA, MITOCHONDRIAL"/>
    <property type="match status" value="1"/>
</dbReference>
<dbReference type="Pfam" id="PF00006">
    <property type="entry name" value="ATP-synt_ab"/>
    <property type="match status" value="1"/>
</dbReference>
<dbReference type="Pfam" id="PF00306">
    <property type="entry name" value="ATP-synt_ab_C"/>
    <property type="match status" value="1"/>
</dbReference>
<dbReference type="Pfam" id="PF02874">
    <property type="entry name" value="ATP-synt_ab_N"/>
    <property type="match status" value="1"/>
</dbReference>
<dbReference type="SUPFAM" id="SSF47917">
    <property type="entry name" value="C-terminal domain of alpha and beta subunits of F1 ATP synthase"/>
    <property type="match status" value="1"/>
</dbReference>
<dbReference type="SUPFAM" id="SSF50615">
    <property type="entry name" value="N-terminal domain of alpha and beta subunits of F1 ATP synthase"/>
    <property type="match status" value="1"/>
</dbReference>
<dbReference type="SUPFAM" id="SSF52540">
    <property type="entry name" value="P-loop containing nucleoside triphosphate hydrolases"/>
    <property type="match status" value="1"/>
</dbReference>
<dbReference type="PROSITE" id="PS00152">
    <property type="entry name" value="ATPASE_ALPHA_BETA"/>
    <property type="match status" value="1"/>
</dbReference>
<name>ATPA_UREP2</name>
<proteinExistence type="inferred from homology"/>
<comment type="function">
    <text evidence="1">Produces ATP from ADP in the presence of a proton gradient across the membrane. The alpha chain is a regulatory subunit (By similarity).</text>
</comment>
<comment type="catalytic activity">
    <reaction>
        <text>ATP + H2O + 4 H(+)(in) = ADP + phosphate + 5 H(+)(out)</text>
        <dbReference type="Rhea" id="RHEA:57720"/>
        <dbReference type="ChEBI" id="CHEBI:15377"/>
        <dbReference type="ChEBI" id="CHEBI:15378"/>
        <dbReference type="ChEBI" id="CHEBI:30616"/>
        <dbReference type="ChEBI" id="CHEBI:43474"/>
        <dbReference type="ChEBI" id="CHEBI:456216"/>
        <dbReference type="EC" id="7.1.2.2"/>
    </reaction>
</comment>
<comment type="subunit">
    <text evidence="1">F-type ATPases have 2 components, CF(1) - the catalytic core - and CF(0) - the membrane proton channel. CF(1) has five subunits: alpha(3), beta(3), gamma(1), delta(1), epsilon(1). CF(0) has three main subunits: a(1), b(2) and c(9-12). The alpha and beta chains form an alternating ring which encloses part of the gamma chain. CF(1) is attached to CF(0) by a central stalk formed by the gamma and epsilon chains, while a peripheral stalk is formed by the delta and b chains (By similarity).</text>
</comment>
<comment type="subcellular location">
    <subcellularLocation>
        <location evidence="1">Cell membrane</location>
        <topology evidence="1">Peripheral membrane protein</topology>
    </subcellularLocation>
</comment>
<comment type="similarity">
    <text evidence="2">Belongs to the ATPase alpha/beta chains family.</text>
</comment>
<accession>B1AIC1</accession>